<dbReference type="EMBL" id="CP000362">
    <property type="protein sequence ID" value="ABG30105.1"/>
    <property type="molecule type" value="Genomic_DNA"/>
</dbReference>
<dbReference type="RefSeq" id="WP_011566727.1">
    <property type="nucleotide sequence ID" value="NC_008209.1"/>
</dbReference>
<dbReference type="SMR" id="Q16D38"/>
<dbReference type="STRING" id="375451.RD1_0386"/>
<dbReference type="KEGG" id="rde:RD1_0386"/>
<dbReference type="eggNOG" id="COG0532">
    <property type="taxonomic scope" value="Bacteria"/>
</dbReference>
<dbReference type="HOGENOM" id="CLU_006301_10_1_5"/>
<dbReference type="OrthoDB" id="9811804at2"/>
<dbReference type="Proteomes" id="UP000007029">
    <property type="component" value="Chromosome"/>
</dbReference>
<dbReference type="GO" id="GO:0005829">
    <property type="term" value="C:cytosol"/>
    <property type="evidence" value="ECO:0007669"/>
    <property type="project" value="TreeGrafter"/>
</dbReference>
<dbReference type="GO" id="GO:0005525">
    <property type="term" value="F:GTP binding"/>
    <property type="evidence" value="ECO:0007669"/>
    <property type="project" value="UniProtKB-KW"/>
</dbReference>
<dbReference type="GO" id="GO:0003924">
    <property type="term" value="F:GTPase activity"/>
    <property type="evidence" value="ECO:0007669"/>
    <property type="project" value="UniProtKB-UniRule"/>
</dbReference>
<dbReference type="GO" id="GO:0003743">
    <property type="term" value="F:translation initiation factor activity"/>
    <property type="evidence" value="ECO:0007669"/>
    <property type="project" value="UniProtKB-UniRule"/>
</dbReference>
<dbReference type="CDD" id="cd01887">
    <property type="entry name" value="IF2_eIF5B"/>
    <property type="match status" value="1"/>
</dbReference>
<dbReference type="CDD" id="cd03702">
    <property type="entry name" value="IF2_mtIF2_II"/>
    <property type="match status" value="1"/>
</dbReference>
<dbReference type="CDD" id="cd03692">
    <property type="entry name" value="mtIF2_IVc"/>
    <property type="match status" value="1"/>
</dbReference>
<dbReference type="FunFam" id="2.40.30.10:FF:000007">
    <property type="entry name" value="Translation initiation factor IF-2"/>
    <property type="match status" value="1"/>
</dbReference>
<dbReference type="FunFam" id="2.40.30.10:FF:000008">
    <property type="entry name" value="Translation initiation factor IF-2"/>
    <property type="match status" value="1"/>
</dbReference>
<dbReference type="FunFam" id="3.40.50.10050:FF:000001">
    <property type="entry name" value="Translation initiation factor IF-2"/>
    <property type="match status" value="1"/>
</dbReference>
<dbReference type="FunFam" id="3.40.50.300:FF:000019">
    <property type="entry name" value="Translation initiation factor IF-2"/>
    <property type="match status" value="1"/>
</dbReference>
<dbReference type="Gene3D" id="3.40.50.300">
    <property type="entry name" value="P-loop containing nucleotide triphosphate hydrolases"/>
    <property type="match status" value="1"/>
</dbReference>
<dbReference type="Gene3D" id="2.40.30.10">
    <property type="entry name" value="Translation factors"/>
    <property type="match status" value="2"/>
</dbReference>
<dbReference type="Gene3D" id="3.40.50.10050">
    <property type="entry name" value="Translation initiation factor IF- 2, domain 3"/>
    <property type="match status" value="1"/>
</dbReference>
<dbReference type="HAMAP" id="MF_00100_B">
    <property type="entry name" value="IF_2_B"/>
    <property type="match status" value="1"/>
</dbReference>
<dbReference type="InterPro" id="IPR053905">
    <property type="entry name" value="EF-G-like_DII"/>
</dbReference>
<dbReference type="InterPro" id="IPR013575">
    <property type="entry name" value="IF2_assoc_dom_bac"/>
</dbReference>
<dbReference type="InterPro" id="IPR044145">
    <property type="entry name" value="IF2_II"/>
</dbReference>
<dbReference type="InterPro" id="IPR006847">
    <property type="entry name" value="IF2_N"/>
</dbReference>
<dbReference type="InterPro" id="IPR027417">
    <property type="entry name" value="P-loop_NTPase"/>
</dbReference>
<dbReference type="InterPro" id="IPR005225">
    <property type="entry name" value="Small_GTP-bd"/>
</dbReference>
<dbReference type="InterPro" id="IPR000795">
    <property type="entry name" value="T_Tr_GTP-bd_dom"/>
</dbReference>
<dbReference type="InterPro" id="IPR000178">
    <property type="entry name" value="TF_IF2_bacterial-like"/>
</dbReference>
<dbReference type="InterPro" id="IPR015760">
    <property type="entry name" value="TIF_IF2"/>
</dbReference>
<dbReference type="InterPro" id="IPR023115">
    <property type="entry name" value="TIF_IF2_dom3"/>
</dbReference>
<dbReference type="InterPro" id="IPR036925">
    <property type="entry name" value="TIF_IF2_dom3_sf"/>
</dbReference>
<dbReference type="InterPro" id="IPR009000">
    <property type="entry name" value="Transl_B-barrel_sf"/>
</dbReference>
<dbReference type="NCBIfam" id="TIGR00487">
    <property type="entry name" value="IF-2"/>
    <property type="match status" value="1"/>
</dbReference>
<dbReference type="NCBIfam" id="TIGR00231">
    <property type="entry name" value="small_GTP"/>
    <property type="match status" value="1"/>
</dbReference>
<dbReference type="PANTHER" id="PTHR43381:SF5">
    <property type="entry name" value="TR-TYPE G DOMAIN-CONTAINING PROTEIN"/>
    <property type="match status" value="1"/>
</dbReference>
<dbReference type="PANTHER" id="PTHR43381">
    <property type="entry name" value="TRANSLATION INITIATION FACTOR IF-2-RELATED"/>
    <property type="match status" value="1"/>
</dbReference>
<dbReference type="Pfam" id="PF22042">
    <property type="entry name" value="EF-G_D2"/>
    <property type="match status" value="1"/>
</dbReference>
<dbReference type="Pfam" id="PF00009">
    <property type="entry name" value="GTP_EFTU"/>
    <property type="match status" value="1"/>
</dbReference>
<dbReference type="Pfam" id="PF11987">
    <property type="entry name" value="IF-2"/>
    <property type="match status" value="1"/>
</dbReference>
<dbReference type="Pfam" id="PF08364">
    <property type="entry name" value="IF2_assoc"/>
    <property type="match status" value="1"/>
</dbReference>
<dbReference type="Pfam" id="PF04760">
    <property type="entry name" value="IF2_N"/>
    <property type="match status" value="1"/>
</dbReference>
<dbReference type="SUPFAM" id="SSF52156">
    <property type="entry name" value="Initiation factor IF2/eIF5b, domain 3"/>
    <property type="match status" value="1"/>
</dbReference>
<dbReference type="SUPFAM" id="SSF52540">
    <property type="entry name" value="P-loop containing nucleoside triphosphate hydrolases"/>
    <property type="match status" value="1"/>
</dbReference>
<dbReference type="SUPFAM" id="SSF50447">
    <property type="entry name" value="Translation proteins"/>
    <property type="match status" value="2"/>
</dbReference>
<dbReference type="PROSITE" id="PS51722">
    <property type="entry name" value="G_TR_2"/>
    <property type="match status" value="1"/>
</dbReference>
<dbReference type="PROSITE" id="PS01176">
    <property type="entry name" value="IF2"/>
    <property type="match status" value="1"/>
</dbReference>
<keyword id="KW-0963">Cytoplasm</keyword>
<keyword id="KW-0342">GTP-binding</keyword>
<keyword id="KW-0396">Initiation factor</keyword>
<keyword id="KW-0547">Nucleotide-binding</keyword>
<keyword id="KW-0648">Protein biosynthesis</keyword>
<keyword id="KW-1185">Reference proteome</keyword>
<reference key="1">
    <citation type="journal article" date="2007" name="J. Bacteriol.">
        <title>The complete genome sequence of Roseobacter denitrificans reveals a mixotrophic rather than photosynthetic metabolism.</title>
        <authorList>
            <person name="Swingley W.D."/>
            <person name="Sadekar S."/>
            <person name="Mastrian S.D."/>
            <person name="Matthies H.J."/>
            <person name="Hao J."/>
            <person name="Ramos H."/>
            <person name="Acharya C.R."/>
            <person name="Conrad A.L."/>
            <person name="Taylor H.L."/>
            <person name="Dejesa L.C."/>
            <person name="Shah M.K."/>
            <person name="O'Huallachain M.E."/>
            <person name="Lince M.T."/>
            <person name="Blankenship R.E."/>
            <person name="Beatty J.T."/>
            <person name="Touchman J.W."/>
        </authorList>
    </citation>
    <scope>NUCLEOTIDE SEQUENCE [LARGE SCALE GENOMIC DNA]</scope>
    <source>
        <strain>ATCC 33942 / OCh 114</strain>
    </source>
</reference>
<feature type="chain" id="PRO_1000008325" description="Translation initiation factor IF-2">
    <location>
        <begin position="1"/>
        <end position="824"/>
    </location>
</feature>
<feature type="domain" description="tr-type G">
    <location>
        <begin position="321"/>
        <end position="489"/>
    </location>
</feature>
<feature type="region of interest" description="Disordered" evidence="3">
    <location>
        <begin position="1"/>
        <end position="32"/>
    </location>
</feature>
<feature type="region of interest" description="Disordered" evidence="3">
    <location>
        <begin position="45"/>
        <end position="232"/>
    </location>
</feature>
<feature type="region of interest" description="G1" evidence="1">
    <location>
        <begin position="330"/>
        <end position="337"/>
    </location>
</feature>
<feature type="region of interest" description="G2" evidence="1">
    <location>
        <begin position="355"/>
        <end position="359"/>
    </location>
</feature>
<feature type="region of interest" description="G3" evidence="1">
    <location>
        <begin position="377"/>
        <end position="380"/>
    </location>
</feature>
<feature type="region of interest" description="G4" evidence="1">
    <location>
        <begin position="431"/>
        <end position="434"/>
    </location>
</feature>
<feature type="region of interest" description="G5" evidence="1">
    <location>
        <begin position="467"/>
        <end position="469"/>
    </location>
</feature>
<feature type="compositionally biased region" description="Low complexity" evidence="3">
    <location>
        <begin position="45"/>
        <end position="57"/>
    </location>
</feature>
<feature type="compositionally biased region" description="Basic and acidic residues" evidence="3">
    <location>
        <begin position="86"/>
        <end position="144"/>
    </location>
</feature>
<feature type="compositionally biased region" description="Low complexity" evidence="3">
    <location>
        <begin position="145"/>
        <end position="167"/>
    </location>
</feature>
<feature type="compositionally biased region" description="Basic and acidic residues" evidence="3">
    <location>
        <begin position="170"/>
        <end position="193"/>
    </location>
</feature>
<feature type="binding site" evidence="2">
    <location>
        <begin position="330"/>
        <end position="337"/>
    </location>
    <ligand>
        <name>GTP</name>
        <dbReference type="ChEBI" id="CHEBI:37565"/>
    </ligand>
</feature>
<feature type="binding site" evidence="2">
    <location>
        <begin position="377"/>
        <end position="381"/>
    </location>
    <ligand>
        <name>GTP</name>
        <dbReference type="ChEBI" id="CHEBI:37565"/>
    </ligand>
</feature>
<feature type="binding site" evidence="2">
    <location>
        <begin position="431"/>
        <end position="434"/>
    </location>
    <ligand>
        <name>GTP</name>
        <dbReference type="ChEBI" id="CHEBI:37565"/>
    </ligand>
</feature>
<evidence type="ECO:0000250" key="1"/>
<evidence type="ECO:0000255" key="2">
    <source>
        <dbReference type="HAMAP-Rule" id="MF_00100"/>
    </source>
</evidence>
<evidence type="ECO:0000256" key="3">
    <source>
        <dbReference type="SAM" id="MobiDB-lite"/>
    </source>
</evidence>
<protein>
    <recommendedName>
        <fullName evidence="2">Translation initiation factor IF-2</fullName>
    </recommendedName>
</protein>
<organism>
    <name type="scientific">Roseobacter denitrificans (strain ATCC 33942 / OCh 114)</name>
    <name type="common">Erythrobacter sp. (strain OCh 114)</name>
    <name type="synonym">Roseobacter denitrificans</name>
    <dbReference type="NCBI Taxonomy" id="375451"/>
    <lineage>
        <taxon>Bacteria</taxon>
        <taxon>Pseudomonadati</taxon>
        <taxon>Pseudomonadota</taxon>
        <taxon>Alphaproteobacteria</taxon>
        <taxon>Rhodobacterales</taxon>
        <taxon>Roseobacteraceae</taxon>
        <taxon>Roseobacter</taxon>
    </lineage>
</organism>
<gene>
    <name evidence="2" type="primary">infB</name>
    <name type="ordered locus">RD1_0386</name>
</gene>
<accession>Q16D38</accession>
<proteinExistence type="inferred from homology"/>
<sequence>MSDTDGKKTLGLRGGAPRPGNVKQSFSHGRTKNVVVETKRKRVVVPKAGATTSAGGKAPIGDPSRRPAGISDAEMERRLKAVKAAKAREAEEEAARIAEEKARAEERERRRAEQEERERAEREREESLKAKAEEDKRRKDEAEAAAKAAAAPAAEPVVQRPAAKAAPEPAPRKQQDRDRDNKRGGKGNDDSRRSGKLTLNQALAGGEGGRQRSMAAMKRKQERARQKAMGGQVEREKVVRDVQVPEAIVVSELANRMSEKVGEVVKALMNNGMMVTQNQAIDADTAELIVQEFGHRIVRVSDADVEDVIKEVEDDEADLKTRPPVVTIMGHVDHGKTSLLDAIRKAKVVAGEAGGITQHIGAYQVKTDSGQLLSFLDTPGHAAFTSMRSRGAQVTDIVVLVVAADDAVMPQTIEAINHAKAAEVPMIVAINKIDRPAADPTKVRTDLLQHEVIVEQMSGDVQDVEVSAITGQGLDDLLEAIALQAEILELKANPNRAAQGAVIEAQLDVGRGPVATVLVQNGTLRQGDIFVVGEQYGKVRALINDQGERVKEAGPSVPVEVLGLNGTPEAGDVLNVTSTEAQAREIASYRANAAKDKRAAAGAATTLEQLMANAKADEDVSELPILVKADVQGSAEAIVQAMEKIGNDEVRVRVLHSGVGAITETDVGLAEASGAPIMGFNVRANASARNTANQKGVELRYYSIIYDLVDDVKAAASGLLSAEIRENFIGYATIKEVFKVTGVGKVAGCLVTEGVARRSAGVRLLRDNVVIHEGTLKTLKRFKDEVAEVQSGQECGMAFENYDDIRADDVIEIFEREEITRTLT</sequence>
<comment type="function">
    <text evidence="2">One of the essential components for the initiation of protein synthesis. Protects formylmethionyl-tRNA from spontaneous hydrolysis and promotes its binding to the 30S ribosomal subunits. Also involved in the hydrolysis of GTP during the formation of the 70S ribosomal complex.</text>
</comment>
<comment type="subcellular location">
    <subcellularLocation>
        <location evidence="2">Cytoplasm</location>
    </subcellularLocation>
</comment>
<comment type="similarity">
    <text evidence="2">Belongs to the TRAFAC class translation factor GTPase superfamily. Classic translation factor GTPase family. IF-2 subfamily.</text>
</comment>
<name>IF2_ROSDO</name>